<accession>P41501</accession>
<proteinExistence type="predicted"/>
<name>HRPK_PSESY</name>
<gene>
    <name type="primary">hrpK</name>
</gene>
<sequence>MRISSSPSPALGSIVNQPTSGELAAETPLAKASLTQSGAGGGQAFVQFGQANDSPSSFSGTEQSGSSLMSLLTRSSSSESTSSVDQDSDQVSPMTSVSSTASASPTAASNPANAPSATDAAFLDNSEYSSPEALKRWEPMVANLPPEEREQAAKELNRPIAAAWMARENGPNAEKAMAFINANPALKTAVDVGKDGGNADGKITNKDLKAFAKNMEKAADNADKDVAKYMEDNPGADPQSLEMVRSAAVMRANMPLATAADPHHAVGAADKTDVDGNVSAEGLKALIKSNPGLSGTLKQSSNMWSQAGFLSQVDEAGLTGRKKAAHSPDQVFDASNMSEWIRKSAPKNGGQFASMLSDAATLNSVAGIDISKLNAQVFEKPKAYTGAQKAAVMIKLQQTQQSVIAGRDLRNTEKTEAGLNERIAQLQADPDVQEYLNKSIPEQERSLVRSDSALQKAVTEQAQNVNSGKALQTDLATADKAVDKHNPDPDYSGAITGLSAQLQLQKDLFPDAQVPTAQQVFNNQPDEVQTKIADSYVRNFSEGGALKQLLGQKKSDAGESLQTADNQKAAYESVLPADFVNGERESYTASTLSELQNSKKGRKLLEGKTDEEGALRWPSSSPSKVSEARRIQFGHGLRVSV</sequence>
<protein>
    <recommendedName>
        <fullName>Pathogenicity locus protein HrpK</fullName>
    </recommendedName>
</protein>
<evidence type="ECO:0000256" key="1">
    <source>
        <dbReference type="SAM" id="MobiDB-lite"/>
    </source>
</evidence>
<organism>
    <name type="scientific">Pseudomonas syringae pv. syringae</name>
    <dbReference type="NCBI Taxonomy" id="321"/>
    <lineage>
        <taxon>Bacteria</taxon>
        <taxon>Pseudomonadati</taxon>
        <taxon>Pseudomonadota</taxon>
        <taxon>Gammaproteobacteria</taxon>
        <taxon>Pseudomonadales</taxon>
        <taxon>Pseudomonadaceae</taxon>
        <taxon>Pseudomonas</taxon>
        <taxon>Pseudomonas syringae</taxon>
    </lineage>
</organism>
<feature type="chain" id="PRO_0000084066" description="Pathogenicity locus protein HrpK">
    <location>
        <begin position="1"/>
        <end position="641"/>
    </location>
</feature>
<feature type="region of interest" description="Disordered" evidence="1">
    <location>
        <begin position="1"/>
        <end position="127"/>
    </location>
</feature>
<feature type="region of interest" description="Disordered" evidence="1">
    <location>
        <begin position="598"/>
        <end position="628"/>
    </location>
</feature>
<feature type="compositionally biased region" description="Polar residues" evidence="1">
    <location>
        <begin position="1"/>
        <end position="20"/>
    </location>
</feature>
<feature type="compositionally biased region" description="Low complexity" evidence="1">
    <location>
        <begin position="44"/>
        <end position="121"/>
    </location>
</feature>
<feature type="compositionally biased region" description="Basic and acidic residues" evidence="1">
    <location>
        <begin position="603"/>
        <end position="614"/>
    </location>
</feature>
<dbReference type="EMBL" id="U03855">
    <property type="protein sequence ID" value="AAA17653.1"/>
    <property type="molecule type" value="Unassigned_DNA"/>
</dbReference>
<dbReference type="PIR" id="D49889">
    <property type="entry name" value="D49889"/>
</dbReference>
<dbReference type="InterPro" id="IPR031613">
    <property type="entry name" value="HrpK"/>
</dbReference>
<dbReference type="Pfam" id="PF16937">
    <property type="entry name" value="T3SS_HrpK1"/>
    <property type="match status" value="1"/>
</dbReference>
<reference key="1">
    <citation type="journal article" date="1994" name="J. Bacteriol.">
        <title>Identification of a putative alternate sigma factor and characterization of a multicomponent regulatory cascade controlling the expression of Pseudomonas syringae pv. syringae Pss61 hrp and hrmA genes.</title>
        <authorList>
            <person name="Xiao Y."/>
            <person name="Heu S."/>
            <person name="Yi J."/>
            <person name="Lu Y."/>
            <person name="Hutcheson S.W."/>
        </authorList>
    </citation>
    <scope>NUCLEOTIDE SEQUENCE [GENOMIC DNA]</scope>
    <source>
        <strain>Pss61</strain>
    </source>
</reference>
<reference key="2">
    <citation type="journal article" date="1993" name="Mol. Plant Microbe Interact.">
        <title>Nucleotide sequence and properties of the hrmA locus associated with the Pseudomonas syringae pv. syringae 61 hrp gene cluster.</title>
        <authorList>
            <person name="Heu S."/>
            <person name="Hutcheson S.W."/>
        </authorList>
    </citation>
    <scope>NUCLEOTIDE SEQUENCE [GENOMIC DNA]</scope>
    <source>
        <strain>Pss61</strain>
    </source>
</reference>